<proteinExistence type="inferred from homology"/>
<keyword id="KW-0413">Isomerase</keyword>
<keyword id="KW-1185">Reference proteome</keyword>
<keyword id="KW-0819">tRNA processing</keyword>
<evidence type="ECO:0000255" key="1">
    <source>
        <dbReference type="HAMAP-Rule" id="MF_00171"/>
    </source>
</evidence>
<feature type="chain" id="PRO_1000017186" description="tRNA pseudouridine synthase A">
    <location>
        <begin position="1"/>
        <end position="267"/>
    </location>
</feature>
<feature type="active site" description="Nucleophile" evidence="1">
    <location>
        <position position="51"/>
    </location>
</feature>
<feature type="binding site" evidence="1">
    <location>
        <position position="109"/>
    </location>
    <ligand>
        <name>substrate</name>
    </ligand>
</feature>
<dbReference type="EC" id="5.4.99.12" evidence="1"/>
<dbReference type="EMBL" id="CP000253">
    <property type="protein sequence ID" value="ABD31499.1"/>
    <property type="molecule type" value="Genomic_DNA"/>
</dbReference>
<dbReference type="RefSeq" id="WP_001221860.1">
    <property type="nucleotide sequence ID" value="NZ_LS483365.1"/>
</dbReference>
<dbReference type="RefSeq" id="YP_500948.1">
    <property type="nucleotide sequence ID" value="NC_007795.1"/>
</dbReference>
<dbReference type="SMR" id="Q2FW37"/>
<dbReference type="STRING" id="93061.SAOUHSC_02480"/>
<dbReference type="PaxDb" id="1280-SAXN108_2469"/>
<dbReference type="GeneID" id="3920857"/>
<dbReference type="KEGG" id="sao:SAOUHSC_02480"/>
<dbReference type="PATRIC" id="fig|93061.5.peg.2236"/>
<dbReference type="eggNOG" id="COG0101">
    <property type="taxonomic scope" value="Bacteria"/>
</dbReference>
<dbReference type="HOGENOM" id="CLU_014673_0_1_9"/>
<dbReference type="OrthoDB" id="9811823at2"/>
<dbReference type="PRO" id="PR:Q2FW37"/>
<dbReference type="Proteomes" id="UP000008816">
    <property type="component" value="Chromosome"/>
</dbReference>
<dbReference type="GO" id="GO:0009982">
    <property type="term" value="F:pseudouridine synthase activity"/>
    <property type="evidence" value="ECO:0000318"/>
    <property type="project" value="GO_Central"/>
</dbReference>
<dbReference type="GO" id="GO:0003723">
    <property type="term" value="F:RNA binding"/>
    <property type="evidence" value="ECO:0007669"/>
    <property type="project" value="InterPro"/>
</dbReference>
<dbReference type="GO" id="GO:0160147">
    <property type="term" value="F:tRNA pseudouridine(38-40) synthase activity"/>
    <property type="evidence" value="ECO:0007669"/>
    <property type="project" value="UniProtKB-EC"/>
</dbReference>
<dbReference type="GO" id="GO:0031119">
    <property type="term" value="P:tRNA pseudouridine synthesis"/>
    <property type="evidence" value="ECO:0000318"/>
    <property type="project" value="GO_Central"/>
</dbReference>
<dbReference type="CDD" id="cd02570">
    <property type="entry name" value="PseudoU_synth_EcTruA"/>
    <property type="match status" value="1"/>
</dbReference>
<dbReference type="FunFam" id="3.30.70.580:FF:000001">
    <property type="entry name" value="tRNA pseudouridine synthase A"/>
    <property type="match status" value="1"/>
</dbReference>
<dbReference type="Gene3D" id="3.30.70.660">
    <property type="entry name" value="Pseudouridine synthase I, catalytic domain, C-terminal subdomain"/>
    <property type="match status" value="1"/>
</dbReference>
<dbReference type="Gene3D" id="3.30.70.580">
    <property type="entry name" value="Pseudouridine synthase I, catalytic domain, N-terminal subdomain"/>
    <property type="match status" value="1"/>
</dbReference>
<dbReference type="HAMAP" id="MF_00171">
    <property type="entry name" value="TruA"/>
    <property type="match status" value="1"/>
</dbReference>
<dbReference type="InterPro" id="IPR020103">
    <property type="entry name" value="PsdUridine_synth_cat_dom_sf"/>
</dbReference>
<dbReference type="InterPro" id="IPR001406">
    <property type="entry name" value="PsdUridine_synth_TruA"/>
</dbReference>
<dbReference type="InterPro" id="IPR020097">
    <property type="entry name" value="PsdUridine_synth_TruA_a/b_dom"/>
</dbReference>
<dbReference type="InterPro" id="IPR020095">
    <property type="entry name" value="PsdUridine_synth_TruA_C"/>
</dbReference>
<dbReference type="InterPro" id="IPR020094">
    <property type="entry name" value="TruA/RsuA/RluB/E/F_N"/>
</dbReference>
<dbReference type="NCBIfam" id="TIGR00071">
    <property type="entry name" value="hisT_truA"/>
    <property type="match status" value="1"/>
</dbReference>
<dbReference type="PANTHER" id="PTHR11142">
    <property type="entry name" value="PSEUDOURIDYLATE SYNTHASE"/>
    <property type="match status" value="1"/>
</dbReference>
<dbReference type="PANTHER" id="PTHR11142:SF0">
    <property type="entry name" value="TRNA PSEUDOURIDINE SYNTHASE-LIKE 1"/>
    <property type="match status" value="1"/>
</dbReference>
<dbReference type="Pfam" id="PF01416">
    <property type="entry name" value="PseudoU_synth_1"/>
    <property type="match status" value="2"/>
</dbReference>
<dbReference type="PIRSF" id="PIRSF001430">
    <property type="entry name" value="tRNA_psdUrid_synth"/>
    <property type="match status" value="1"/>
</dbReference>
<dbReference type="SUPFAM" id="SSF55120">
    <property type="entry name" value="Pseudouridine synthase"/>
    <property type="match status" value="1"/>
</dbReference>
<protein>
    <recommendedName>
        <fullName evidence="1">tRNA pseudouridine synthase A</fullName>
        <ecNumber evidence="1">5.4.99.12</ecNumber>
    </recommendedName>
    <alternativeName>
        <fullName evidence="1">tRNA pseudouridine(38-40) synthase</fullName>
    </alternativeName>
    <alternativeName>
        <fullName evidence="1">tRNA pseudouridylate synthase I</fullName>
    </alternativeName>
    <alternativeName>
        <fullName evidence="1">tRNA-uridine isomerase I</fullName>
    </alternativeName>
</protein>
<organism>
    <name type="scientific">Staphylococcus aureus (strain NCTC 8325 / PS 47)</name>
    <dbReference type="NCBI Taxonomy" id="93061"/>
    <lineage>
        <taxon>Bacteria</taxon>
        <taxon>Bacillati</taxon>
        <taxon>Bacillota</taxon>
        <taxon>Bacilli</taxon>
        <taxon>Bacillales</taxon>
        <taxon>Staphylococcaceae</taxon>
        <taxon>Staphylococcus</taxon>
    </lineage>
</organism>
<accession>Q2FW37</accession>
<gene>
    <name evidence="1" type="primary">truA</name>
    <name type="ordered locus">SAOUHSC_02480</name>
</gene>
<reference key="1">
    <citation type="book" date="2006" name="Gram positive pathogens, 2nd edition">
        <title>The Staphylococcus aureus NCTC 8325 genome.</title>
        <editorList>
            <person name="Fischetti V."/>
            <person name="Novick R."/>
            <person name="Ferretti J."/>
            <person name="Portnoy D."/>
            <person name="Rood J."/>
        </editorList>
        <authorList>
            <person name="Gillaspy A.F."/>
            <person name="Worrell V."/>
            <person name="Orvis J."/>
            <person name="Roe B.A."/>
            <person name="Dyer D.W."/>
            <person name="Iandolo J.J."/>
        </authorList>
    </citation>
    <scope>NUCLEOTIDE SEQUENCE [LARGE SCALE GENOMIC DNA]</scope>
    <source>
        <strain>NCTC 8325 / PS 47</strain>
    </source>
</reference>
<comment type="function">
    <text evidence="1">Formation of pseudouridine at positions 38, 39 and 40 in the anticodon stem and loop of transfer RNAs.</text>
</comment>
<comment type="catalytic activity">
    <reaction evidence="1">
        <text>uridine(38/39/40) in tRNA = pseudouridine(38/39/40) in tRNA</text>
        <dbReference type="Rhea" id="RHEA:22376"/>
        <dbReference type="Rhea" id="RHEA-COMP:10085"/>
        <dbReference type="Rhea" id="RHEA-COMP:10087"/>
        <dbReference type="ChEBI" id="CHEBI:65314"/>
        <dbReference type="ChEBI" id="CHEBI:65315"/>
        <dbReference type="EC" id="5.4.99.12"/>
    </reaction>
</comment>
<comment type="subunit">
    <text evidence="1">Homodimer.</text>
</comment>
<comment type="similarity">
    <text evidence="1">Belongs to the tRNA pseudouridine synthase TruA family.</text>
</comment>
<sequence>MRILVEIAYQGNNFLGFQIQQNGRTVQQQFEKLLQRMHKRHVRIHPSSRTDRGVHAIQQYFHFDTELNIPMSQWQYAMNRTLPDDIYVNNVVTVDDDFHCRYDCVGKRYRYKVYQAQHRDPFQSGLKTFIPETLDLGKMNRAAQQFIGTHDFTGFCSQKTEVESKVRTLYQSEIVKTDDGFDYIVTGSGFLYNMVRVLVAFLIEVGKGRHEVSDVPKLLESKNRKNVPFTAPAEGLYLEKIYLDENELLKDFGNDIKIHRKKSLQND</sequence>
<name>TRUA_STAA8</name>